<accession>P38370</accession>
<gene>
    <name evidence="7" type="primary">oar</name>
</gene>
<sequence length="1061" mass="114455">MHLNRVLRETGVVVAAGLLYGSAAFAQSSTIIGTVIDAQSRQPAADVVVTATSPNLQGEQTVVTDAQGNYRIPQLPPGDYTLRFEKEQFKPYARSAIQLRLNRTIRVNVELLPEALGEVVEIVGAPPTIDVGSTTMGVNVDQEFIKRIAVARPGGKGGATRSFESLAELAPGAQNDNYGVSINGSTSPENGYVVDGLSTNDPAFGVNASPLSIEFVQDVNIITGGYMPEFGRSTGGVINAVTRSGSNEFHGSVFANWTPGTLEGTRKQIREEGTVITGQNQLQNLGDFGATLGGPILKDKLWFFAGFAPSFTRYQHTRTLNALRVDDEGNTIKDETDFTVADAIPGSARKYYADSRTIQYMGKLTYLINQDHNVSFALNGTPTSTGGLGKLSVNPQSGGLPGVLATRPGDFGLTETKANTTSLALKYAGAFADKKVLVDANLGWFHQTASTLPGDGSNLGDRTGLAGYSRMVYTTPRALTLFEALPEGQEGACGSTPEEQLVRSPVTGYGVGGPGFMSDQTLDRYQANAKATYLLNALGTHVFKAGVDVELLSFDQVKAYGGGVFFQEGSNYGVAGQGPAVHDARRYGYQTGPDSAVTQFTQVAKTTSTTVGGFLQDSWSIANRVTLNLGVRYDVQALYGGNGDLSLLLGNQWSPRIGAIVDPFANGRAKVFVNFARYYEQVPLNLMDRAFPGENRISARRSLAEPGQGTATSCDPSSFESQQATCNTDSNLLAIPESSRNVNRFYTGGTVGGTPVDPDIKAQSSDEIVVGAEYEVLANTRLGASYTHKDMNSVIEDMSRDDGNTYFLGNPGSGFAGEFPTPVRNYDNVTVYLNRTFADGWLAQANYTWSRLYGNYPGLFRPETGQLDPNILSDFDLIELLENRTGLLPFDRTHQIKVFGAKEFNISNALSASVGVSYRGSSGTPINYWGSHWAYLQDESFVLPRGAGGRTPWINTIDSNIGVNYRVSKDSVVSFTLDVFNLFNFQGVNTVDQTYTLRDIKPIPGGTPADLENLPGRVEFQDQAPRDEPFGSVDGDVNKNFKNPLSYQAPRQVRFGIRYTF</sequence>
<proteinExistence type="evidence at protein level"/>
<reference key="1">
    <citation type="journal article" date="1993" name="J. Bacteriol.">
        <title>Oar, a 115-kilodalton membrane protein required for development of Myxococcus xanthus.</title>
        <authorList>
            <person name="Martinez-Canamero M."/>
            <person name="Munoz-Dorado J."/>
            <person name="Farez-Vidal E."/>
            <person name="Inouye M."/>
            <person name="Inouye S."/>
        </authorList>
    </citation>
    <scope>NUCLEOTIDE SEQUENCE [GENOMIC DNA]</scope>
    <scope>PROTEIN SEQUENCE OF 776-796</scope>
    <scope>FUNCTION</scope>
    <scope>DISRUPTION PHENOTYPE</scope>
    <source>
        <strain>DZF1 / DK101</strain>
    </source>
</reference>
<reference key="2">
    <citation type="journal article" date="2019" name="Nat. Commun.">
        <title>A TonB-dependent transporter is required for secretion of protease PopC across the bacterial outer membrane.</title>
        <authorList>
            <person name="Gomez-Santos N."/>
            <person name="Glatter T."/>
            <person name="Koebnik R."/>
            <person name="Swiatek-Polatynska M.A."/>
            <person name="Soegaard-Andersen L."/>
        </authorList>
    </citation>
    <scope>FUNCTION</scope>
    <scope>INTERACTION WITH TONB</scope>
    <scope>SUBUNIT</scope>
    <scope>SUBCELLULAR LOCATION</scope>
    <scope>DOMAIN</scope>
    <scope>DISRUPTION PHENOTYPE</scope>
    <scope>MUTAGENESIS OF GLU-118 AND ILE-122</scope>
    <source>
        <strain>DK101</strain>
    </source>
</reference>
<dbReference type="EMBL" id="S64103">
    <property type="protein sequence ID" value="AAB27614.1"/>
    <property type="molecule type" value="Genomic_DNA"/>
</dbReference>
<dbReference type="PIR" id="A40609">
    <property type="entry name" value="A40609"/>
</dbReference>
<dbReference type="TCDB" id="1.B.14.6.3">
    <property type="family name" value="the outer membrane receptor (omr) family"/>
</dbReference>
<dbReference type="GO" id="GO:0009279">
    <property type="term" value="C:cell outer membrane"/>
    <property type="evidence" value="ECO:0007669"/>
    <property type="project" value="UniProtKB-SubCell"/>
</dbReference>
<dbReference type="GO" id="GO:0030246">
    <property type="term" value="F:carbohydrate binding"/>
    <property type="evidence" value="ECO:0007669"/>
    <property type="project" value="InterPro"/>
</dbReference>
<dbReference type="GO" id="GO:0015344">
    <property type="term" value="F:siderophore uptake transmembrane transporter activity"/>
    <property type="evidence" value="ECO:0007669"/>
    <property type="project" value="TreeGrafter"/>
</dbReference>
<dbReference type="Gene3D" id="2.60.40.1120">
    <property type="entry name" value="Carboxypeptidase-like, regulatory domain"/>
    <property type="match status" value="1"/>
</dbReference>
<dbReference type="Gene3D" id="2.40.170.20">
    <property type="entry name" value="TonB-dependent receptor, beta-barrel domain"/>
    <property type="match status" value="1"/>
</dbReference>
<dbReference type="Gene3D" id="2.170.130.10">
    <property type="entry name" value="TonB-dependent receptor, plug domain"/>
    <property type="match status" value="1"/>
</dbReference>
<dbReference type="InterPro" id="IPR013784">
    <property type="entry name" value="Carb-bd-like_fold"/>
</dbReference>
<dbReference type="InterPro" id="IPR037066">
    <property type="entry name" value="Plug_dom_sf"/>
</dbReference>
<dbReference type="InterPro" id="IPR039426">
    <property type="entry name" value="TonB-dep_rcpt-like"/>
</dbReference>
<dbReference type="InterPro" id="IPR036942">
    <property type="entry name" value="TonB_rcpt_b-brl_sf"/>
</dbReference>
<dbReference type="PANTHER" id="PTHR30069:SF46">
    <property type="entry name" value="OAR PROTEIN"/>
    <property type="match status" value="1"/>
</dbReference>
<dbReference type="PANTHER" id="PTHR30069">
    <property type="entry name" value="TONB-DEPENDENT OUTER MEMBRANE RECEPTOR"/>
    <property type="match status" value="1"/>
</dbReference>
<dbReference type="Pfam" id="PF13620">
    <property type="entry name" value="CarboxypepD_reg"/>
    <property type="match status" value="1"/>
</dbReference>
<dbReference type="Pfam" id="PF25183">
    <property type="entry name" value="OMP_b-brl_4"/>
    <property type="match status" value="2"/>
</dbReference>
<dbReference type="SUPFAM" id="SSF56935">
    <property type="entry name" value="Porins"/>
    <property type="match status" value="1"/>
</dbReference>
<dbReference type="SUPFAM" id="SSF49452">
    <property type="entry name" value="Starch-binding domain-like"/>
    <property type="match status" value="1"/>
</dbReference>
<dbReference type="PROSITE" id="PS52016">
    <property type="entry name" value="TONB_DEPENDENT_REC_3"/>
    <property type="match status" value="1"/>
</dbReference>
<keyword id="KW-0998">Cell outer membrane</keyword>
<keyword id="KW-0903">Direct protein sequencing</keyword>
<keyword id="KW-0472">Membrane</keyword>
<keyword id="KW-0732">Signal</keyword>
<keyword id="KW-0346">Stress response</keyword>
<keyword id="KW-0798">TonB box</keyword>
<keyword id="KW-0812">Transmembrane</keyword>
<keyword id="KW-1134">Transmembrane beta strand</keyword>
<keyword id="KW-0813">Transport</keyword>
<evidence type="ECO:0000255" key="1"/>
<evidence type="ECO:0000255" key="2">
    <source>
        <dbReference type="PROSITE-ProRule" id="PRU01360"/>
    </source>
</evidence>
<evidence type="ECO:0000256" key="3">
    <source>
        <dbReference type="SAM" id="MobiDB-lite"/>
    </source>
</evidence>
<evidence type="ECO:0000269" key="4">
    <source>
    </source>
</evidence>
<evidence type="ECO:0000269" key="5">
    <source>
    </source>
</evidence>
<evidence type="ECO:0000303" key="6">
    <source>
    </source>
</evidence>
<evidence type="ECO:0000303" key="7">
    <source>
    </source>
</evidence>
<evidence type="ECO:0000305" key="8"/>
<name>OAR_MYXXA</name>
<feature type="signal peptide" evidence="1">
    <location>
        <begin position="1"/>
        <end position="26"/>
    </location>
</feature>
<feature type="chain" id="PRO_0000021873" description="TonB-dependent transporter Oar">
    <location>
        <begin position="27"/>
        <end position="1061"/>
    </location>
</feature>
<feature type="domain" description="TBDR plug" evidence="2">
    <location>
        <begin position="121"/>
        <end position="243"/>
    </location>
</feature>
<feature type="domain" description="TBDR beta-barrel" evidence="2">
    <location>
        <begin position="248"/>
        <end position="1061"/>
    </location>
</feature>
<feature type="region of interest" description="Disordered" evidence="3">
    <location>
        <begin position="701"/>
        <end position="722"/>
    </location>
</feature>
<feature type="compositionally biased region" description="Polar residues" evidence="3">
    <location>
        <begin position="709"/>
        <end position="722"/>
    </location>
</feature>
<feature type="mutagenesis site" description="Decreases PopC secretion." evidence="4">
    <original>E</original>
    <variation>R</variation>
    <location>
        <position position="118"/>
    </location>
</feature>
<feature type="mutagenesis site" description="Decreases PopC secretion." evidence="4">
    <original>I</original>
    <variation>P</variation>
    <location>
        <position position="122"/>
    </location>
</feature>
<organism>
    <name type="scientific">Myxococcus xanthus</name>
    <dbReference type="NCBI Taxonomy" id="34"/>
    <lineage>
        <taxon>Bacteria</taxon>
        <taxon>Pseudomonadati</taxon>
        <taxon>Myxococcota</taxon>
        <taxon>Myxococcia</taxon>
        <taxon>Myxococcales</taxon>
        <taxon>Cystobacterineae</taxon>
        <taxon>Myxococcaceae</taxon>
        <taxon>Myxococcus</taxon>
    </lineage>
</organism>
<comment type="function">
    <text evidence="4 5">Required for secretion of the protease PopC across the bacterial outer membrane (PubMed:30911012). Binds and probably transports PopC from the periplasm to the extracellular milieu (PubMed:30911012). It derives its energy for transport by interacting with the trans-periplasmic membrane protein TonB (PubMed:30911012). Required for cellular adhesion during fruiting body formation, a multicellular developmental program that is induced in response to starvation (PubMed:8335633).</text>
</comment>
<comment type="subunit">
    <text evidence="4">Interacts with TonB (PubMed:30911012). Part of a transport system composed of the outer membrane transporter Oar, the trans-periplasmic binding protein TonB and the inner membrane proteins ExbB and ExbD (PubMed:30911012).</text>
</comment>
<comment type="subcellular location">
    <subcellularLocation>
        <location evidence="4">Cell outer membrane</location>
        <topology evidence="2">Multi-pass membrane protein</topology>
    </subcellularLocation>
</comment>
<comment type="domain">
    <text evidence="4">The TonB box in the Oar plug domain is important for PopC secretion.</text>
</comment>
<comment type="disruption phenotype">
    <text evidence="4 5">The deletion mutant is impaired in PopC secretion and does not accumulate the intercellular C-signal protein (p17) (PubMed:30911012). Disruption of the gene results in a severe defect in the development of fruiting bodies (PubMed:8335633). The deletion mutant has a growth rate similar to the wild type and displays normal type IV pili-dependent motility and gliding motility (PubMed:30911012).</text>
</comment>
<comment type="similarity">
    <text evidence="2">Belongs to the TonB-dependent receptor family.</text>
</comment>
<protein>
    <recommendedName>
        <fullName evidence="8">TonB-dependent transporter Oar</fullName>
        <shortName evidence="6">TBDT Oar</shortName>
    </recommendedName>
    <alternativeName>
        <fullName evidence="7">OmpA-related protein</fullName>
    </alternativeName>
</protein>